<protein>
    <recommendedName>
        <fullName>Protein Tob1</fullName>
    </recommendedName>
    <alternativeName>
        <fullName>Transducer of erbB-2 1</fullName>
    </alternativeName>
</protein>
<comment type="function">
    <text evidence="2">Anti-proliferative protein; the function is mediated by association with deadenylase subunits of the CCR4-NOT complex. Mediates CPEB3-accelerated mRNA deadenylation by binding to CPEB3 and recruiting CNOT7 which leads to target mRNA deadenylation and decay.</text>
</comment>
<comment type="subunit">
    <text evidence="2 4">Interacts with ERBB2 (By similarity). Interacts with CNOT7 (By similarity). Interacts with CPEB3 (via C-terminal RNA-binding region); recruits CNOT7 to CPEB3 to form a ternary complex required for mRNA deadenylation and decay (PubMed:21336257). Interacts with CNOT8 (By similarity). Interacts with CPEB4 (By similarity).</text>
</comment>
<comment type="subcellular location">
    <subcellularLocation>
        <location evidence="1">Cytoplasm</location>
    </subcellularLocation>
    <subcellularLocation>
        <location evidence="1">Nucleus</location>
    </subcellularLocation>
    <text evidence="1">Only a small fraction localizes to the cytoplasm except in late S-phase where more than half of proteins become cytoplasmic.</text>
</comment>
<comment type="PTM">
    <text evidence="1">Phosphorylated on Ser and Thr residues.</text>
</comment>
<comment type="similarity">
    <text evidence="5">Belongs to the BTG family.</text>
</comment>
<sequence>MQLEIQVALNFIISYLYNKLPRRRVNIFGEELERLLKQKYEGHWYPEKPYKGSGFRCIHVGEKVDPVIEQASKESGLDIDDVRGNLPQDLSVWIDPFEVSYQIGEKGPVKVLYVDDSNENGCELDKEIKNSFNPEAQVFMPISDPASSVSSSPSPPFGHSAAVSPTFMPRSTQPLTFTTATFAATKFGSTKMKNSGRSSKVARTSPISLGLNVNVNDLLKQKAISSSMHSLYGLGLGSQQQPQPQPQQPPSQPPPPPPPPQQQQQHQQQQQQQQQQQQQPQQQTSALSPNAKEFIFPNMQGQGSSTNGMFPGDSPLNLSPLQYSNAFNVFAAYGGLNEKSFVDGLNFSLNNIQYSNQQFQPVMAN</sequence>
<accession>Q8R5K6</accession>
<name>TOB1_RAT</name>
<keyword id="KW-0963">Cytoplasm</keyword>
<keyword id="KW-0539">Nucleus</keyword>
<keyword id="KW-0597">Phosphoprotein</keyword>
<keyword id="KW-1185">Reference proteome</keyword>
<reference key="1">
    <citation type="submission" date="2001-02" db="EMBL/GenBank/DDBJ databases">
        <title>Cloning and characterization of rat tob.</title>
        <authorList>
            <person name="Tu Y."/>
            <person name="Gao X."/>
            <person name="Jing N."/>
        </authorList>
    </citation>
    <scope>NUCLEOTIDE SEQUENCE [MRNA]</scope>
    <source>
        <strain>Sprague-Dawley</strain>
    </source>
</reference>
<reference key="2">
    <citation type="journal article" date="2011" name="EMBO J.">
        <title>Anti-proliferative protein Tob negatively regulates CPEB3 target by recruiting Caf1 deadenylase.</title>
        <authorList>
            <person name="Hosoda N."/>
            <person name="Funakoshi Y."/>
            <person name="Hirasawa M."/>
            <person name="Yamagishi R."/>
            <person name="Asano Y."/>
            <person name="Miyagawa R."/>
            <person name="Ogami K."/>
            <person name="Tsujimoto M."/>
            <person name="Hoshino S."/>
        </authorList>
    </citation>
    <scope>INTERACTION WITH CPEB3</scope>
</reference>
<dbReference type="EMBL" id="AF349723">
    <property type="protein sequence ID" value="AAL79524.1"/>
    <property type="molecule type" value="mRNA"/>
</dbReference>
<dbReference type="SMR" id="Q8R5K6"/>
<dbReference type="FunCoup" id="Q8R5K6">
    <property type="interactions" value="783"/>
</dbReference>
<dbReference type="MINT" id="Q8R5K6"/>
<dbReference type="STRING" id="10116.ENSRNOP00000064047"/>
<dbReference type="PhosphoSitePlus" id="Q8R5K6"/>
<dbReference type="PaxDb" id="10116-ENSRNOP00000064047"/>
<dbReference type="AGR" id="RGD:621126"/>
<dbReference type="RGD" id="621126">
    <property type="gene designation" value="Tob1"/>
</dbReference>
<dbReference type="eggNOG" id="KOG4006">
    <property type="taxonomic scope" value="Eukaryota"/>
</dbReference>
<dbReference type="InParanoid" id="Q8R5K6"/>
<dbReference type="PhylomeDB" id="Q8R5K6"/>
<dbReference type="PRO" id="PR:Q8R5K6"/>
<dbReference type="Proteomes" id="UP000002494">
    <property type="component" value="Unplaced"/>
</dbReference>
<dbReference type="GO" id="GO:0030014">
    <property type="term" value="C:CCR4-NOT complex"/>
    <property type="evidence" value="ECO:0000250"/>
    <property type="project" value="UniProtKB"/>
</dbReference>
<dbReference type="GO" id="GO:0005737">
    <property type="term" value="C:cytoplasm"/>
    <property type="evidence" value="ECO:0000266"/>
    <property type="project" value="RGD"/>
</dbReference>
<dbReference type="GO" id="GO:0005634">
    <property type="term" value="C:nucleus"/>
    <property type="evidence" value="ECO:0000318"/>
    <property type="project" value="GO_Central"/>
</dbReference>
<dbReference type="GO" id="GO:0030971">
    <property type="term" value="F:receptor tyrosine kinase binding"/>
    <property type="evidence" value="ECO:0000250"/>
    <property type="project" value="UniProtKB"/>
</dbReference>
<dbReference type="GO" id="GO:0046332">
    <property type="term" value="F:SMAD binding"/>
    <property type="evidence" value="ECO:0000266"/>
    <property type="project" value="RGD"/>
</dbReference>
<dbReference type="GO" id="GO:0003714">
    <property type="term" value="F:transcription corepressor activity"/>
    <property type="evidence" value="ECO:0000266"/>
    <property type="project" value="RGD"/>
</dbReference>
<dbReference type="GO" id="GO:0030514">
    <property type="term" value="P:negative regulation of BMP signaling pathway"/>
    <property type="evidence" value="ECO:0000266"/>
    <property type="project" value="RGD"/>
</dbReference>
<dbReference type="GO" id="GO:0008285">
    <property type="term" value="P:negative regulation of cell population proliferation"/>
    <property type="evidence" value="ECO:0000250"/>
    <property type="project" value="UniProtKB"/>
</dbReference>
<dbReference type="GO" id="GO:0060212">
    <property type="term" value="P:negative regulation of nuclear-transcribed mRNA poly(A) tail shortening"/>
    <property type="evidence" value="ECO:0000250"/>
    <property type="project" value="UniProtKB"/>
</dbReference>
<dbReference type="GO" id="GO:0045668">
    <property type="term" value="P:negative regulation of osteoblast differentiation"/>
    <property type="evidence" value="ECO:0000266"/>
    <property type="project" value="RGD"/>
</dbReference>
<dbReference type="GO" id="GO:0017148">
    <property type="term" value="P:negative regulation of translation"/>
    <property type="evidence" value="ECO:0000250"/>
    <property type="project" value="UniProtKB"/>
</dbReference>
<dbReference type="GO" id="GO:1900153">
    <property type="term" value="P:positive regulation of nuclear-transcribed mRNA catabolic process, deadenylation-dependent decay"/>
    <property type="evidence" value="ECO:0000250"/>
    <property type="project" value="UniProtKB"/>
</dbReference>
<dbReference type="GO" id="GO:0060213">
    <property type="term" value="P:positive regulation of nuclear-transcribed mRNA poly(A) tail shortening"/>
    <property type="evidence" value="ECO:0000250"/>
    <property type="project" value="UniProtKB"/>
</dbReference>
<dbReference type="GO" id="GO:0010468">
    <property type="term" value="P:regulation of gene expression"/>
    <property type="evidence" value="ECO:0000318"/>
    <property type="project" value="GO_Central"/>
</dbReference>
<dbReference type="GO" id="GO:0060390">
    <property type="term" value="P:regulation of SMAD protein signal transduction"/>
    <property type="evidence" value="ECO:0000266"/>
    <property type="project" value="RGD"/>
</dbReference>
<dbReference type="FunFam" id="3.90.640.90:FF:000001">
    <property type="entry name" value="TOB1 isoform 1"/>
    <property type="match status" value="1"/>
</dbReference>
<dbReference type="Gene3D" id="3.90.640.90">
    <property type="entry name" value="Anti-proliferative protein, N-terminal domain"/>
    <property type="match status" value="1"/>
</dbReference>
<dbReference type="InterPro" id="IPR002087">
    <property type="entry name" value="Anti_prolifrtn"/>
</dbReference>
<dbReference type="InterPro" id="IPR036054">
    <property type="entry name" value="BTG-like_sf"/>
</dbReference>
<dbReference type="InterPro" id="IPR015676">
    <property type="entry name" value="Tob1/2"/>
</dbReference>
<dbReference type="PANTHER" id="PTHR17537:SF6">
    <property type="entry name" value="PROTEIN TOB1"/>
    <property type="match status" value="1"/>
</dbReference>
<dbReference type="PANTHER" id="PTHR17537">
    <property type="entry name" value="TRANSDUCER OF ERBB2 TOB"/>
    <property type="match status" value="1"/>
</dbReference>
<dbReference type="Pfam" id="PF07742">
    <property type="entry name" value="BTG"/>
    <property type="match status" value="1"/>
</dbReference>
<dbReference type="PRINTS" id="PR00310">
    <property type="entry name" value="ANTIPRLFBTG1"/>
</dbReference>
<dbReference type="SMART" id="SM00099">
    <property type="entry name" value="btg1"/>
    <property type="match status" value="1"/>
</dbReference>
<dbReference type="SUPFAM" id="SSF160696">
    <property type="entry name" value="BTG domain-like"/>
    <property type="match status" value="1"/>
</dbReference>
<dbReference type="PROSITE" id="PS00960">
    <property type="entry name" value="BTG_1"/>
    <property type="match status" value="1"/>
</dbReference>
<dbReference type="PROSITE" id="PS01203">
    <property type="entry name" value="BTG_2"/>
    <property type="match status" value="1"/>
</dbReference>
<proteinExistence type="evidence at protein level"/>
<evidence type="ECO:0000250" key="1"/>
<evidence type="ECO:0000250" key="2">
    <source>
        <dbReference type="UniProtKB" id="P50616"/>
    </source>
</evidence>
<evidence type="ECO:0000256" key="3">
    <source>
        <dbReference type="SAM" id="MobiDB-lite"/>
    </source>
</evidence>
<evidence type="ECO:0000269" key="4">
    <source>
    </source>
</evidence>
<evidence type="ECO:0000305" key="5"/>
<organism>
    <name type="scientific">Rattus norvegicus</name>
    <name type="common">Rat</name>
    <dbReference type="NCBI Taxonomy" id="10116"/>
    <lineage>
        <taxon>Eukaryota</taxon>
        <taxon>Metazoa</taxon>
        <taxon>Chordata</taxon>
        <taxon>Craniata</taxon>
        <taxon>Vertebrata</taxon>
        <taxon>Euteleostomi</taxon>
        <taxon>Mammalia</taxon>
        <taxon>Eutheria</taxon>
        <taxon>Euarchontoglires</taxon>
        <taxon>Glires</taxon>
        <taxon>Rodentia</taxon>
        <taxon>Myomorpha</taxon>
        <taxon>Muroidea</taxon>
        <taxon>Muridae</taxon>
        <taxon>Murinae</taxon>
        <taxon>Rattus</taxon>
    </lineage>
</organism>
<gene>
    <name type="primary">Tob1</name>
</gene>
<feature type="chain" id="PRO_0000143814" description="Protein Tob1">
    <location>
        <begin position="1"/>
        <end position="365"/>
    </location>
</feature>
<feature type="region of interest" description="Important for nuclear localization" evidence="1">
    <location>
        <begin position="82"/>
        <end position="92"/>
    </location>
</feature>
<feature type="region of interest" description="Disordered" evidence="3">
    <location>
        <begin position="144"/>
        <end position="171"/>
    </location>
</feature>
<feature type="region of interest" description="Required for interaction with CPEB3" evidence="2">
    <location>
        <begin position="161"/>
        <end position="220"/>
    </location>
</feature>
<feature type="region of interest" description="Disordered" evidence="3">
    <location>
        <begin position="233"/>
        <end position="287"/>
    </location>
</feature>
<feature type="short sequence motif" description="Bipartite nuclear localization signal" evidence="1">
    <location>
        <begin position="22"/>
        <end position="39"/>
    </location>
</feature>
<feature type="short sequence motif" description="Nuclear export signal" evidence="1">
    <location>
        <begin position="228"/>
        <end position="236"/>
    </location>
</feature>
<feature type="compositionally biased region" description="Low complexity" evidence="3">
    <location>
        <begin position="144"/>
        <end position="160"/>
    </location>
</feature>
<feature type="compositionally biased region" description="Pro residues" evidence="3">
    <location>
        <begin position="243"/>
        <end position="261"/>
    </location>
</feature>
<feature type="compositionally biased region" description="Low complexity" evidence="3">
    <location>
        <begin position="262"/>
        <end position="283"/>
    </location>
</feature>
<feature type="modified residue" description="Phosphothreonine" evidence="2">
    <location>
        <position position="204"/>
    </location>
</feature>